<name>COX3_LOXAF</name>
<feature type="chain" id="PRO_0000232860" description="Cytochrome c oxidase subunit 3">
    <location>
        <begin position="1"/>
        <end position="261"/>
    </location>
</feature>
<feature type="topological domain" description="Mitochondrial matrix" evidence="1">
    <location>
        <begin position="1"/>
        <end position="15"/>
    </location>
</feature>
<feature type="transmembrane region" description="Helical; Name=I" evidence="1">
    <location>
        <begin position="16"/>
        <end position="34"/>
    </location>
</feature>
<feature type="topological domain" description="Mitochondrial intermembrane" evidence="1">
    <location>
        <begin position="35"/>
        <end position="40"/>
    </location>
</feature>
<feature type="transmembrane region" description="Helical; Name=II" evidence="1">
    <location>
        <begin position="41"/>
        <end position="66"/>
    </location>
</feature>
<feature type="topological domain" description="Mitochondrial matrix" evidence="1">
    <location>
        <begin position="67"/>
        <end position="72"/>
    </location>
</feature>
<feature type="transmembrane region" description="Helical; Name=III" evidence="1">
    <location>
        <begin position="73"/>
        <end position="105"/>
    </location>
</feature>
<feature type="topological domain" description="Mitochondrial intermembrane" evidence="1">
    <location>
        <begin position="106"/>
        <end position="128"/>
    </location>
</feature>
<feature type="transmembrane region" description="Helical; Name=IV" evidence="1">
    <location>
        <begin position="129"/>
        <end position="152"/>
    </location>
</feature>
<feature type="topological domain" description="Mitochondrial matrix" evidence="1">
    <location>
        <begin position="153"/>
        <end position="155"/>
    </location>
</feature>
<feature type="transmembrane region" description="Helical; Name=V" evidence="1">
    <location>
        <begin position="156"/>
        <end position="183"/>
    </location>
</feature>
<feature type="topological domain" description="Mitochondrial intermembrane" evidence="1">
    <location>
        <begin position="184"/>
        <end position="190"/>
    </location>
</feature>
<feature type="transmembrane region" description="Helical; Name=VI" evidence="1">
    <location>
        <begin position="191"/>
        <end position="223"/>
    </location>
</feature>
<feature type="topological domain" description="Mitochondrial matrix" evidence="1">
    <location>
        <begin position="224"/>
        <end position="232"/>
    </location>
</feature>
<feature type="transmembrane region" description="Helical; Name=VII" evidence="1">
    <location>
        <begin position="233"/>
        <end position="256"/>
    </location>
</feature>
<feature type="topological domain" description="Mitochondrial intermembrane" evidence="1">
    <location>
        <begin position="257"/>
        <end position="261"/>
    </location>
</feature>
<reference key="1">
    <citation type="journal article" date="2006" name="PLoS Biol.">
        <title>Complete mitochondrial genome and phylogeny of Pleistocene mammoth Mammuthus primigenius.</title>
        <authorList>
            <person name="Rogaev E.I."/>
            <person name="Moliaka Y.K."/>
            <person name="Malyarchuk B.A."/>
            <person name="Kondrashov F.A."/>
            <person name="Derenko M.V."/>
            <person name="Chumakov I."/>
            <person name="Grigorenko A.P."/>
        </authorList>
    </citation>
    <scope>NUCLEOTIDE SEQUENCE [GENOMIC DNA]</scope>
    <source>
        <tissue>Blood</tissue>
    </source>
</reference>
<organism>
    <name type="scientific">Loxodonta africana</name>
    <name type="common">African elephant</name>
    <dbReference type="NCBI Taxonomy" id="9785"/>
    <lineage>
        <taxon>Eukaryota</taxon>
        <taxon>Metazoa</taxon>
        <taxon>Chordata</taxon>
        <taxon>Craniata</taxon>
        <taxon>Vertebrata</taxon>
        <taxon>Euteleostomi</taxon>
        <taxon>Mammalia</taxon>
        <taxon>Eutheria</taxon>
        <taxon>Afrotheria</taxon>
        <taxon>Proboscidea</taxon>
        <taxon>Elephantidae</taxon>
        <taxon>Loxodonta</taxon>
    </lineage>
</organism>
<accession>Q2I3F5</accession>
<evidence type="ECO:0000250" key="1">
    <source>
        <dbReference type="UniProtKB" id="P00415"/>
    </source>
</evidence>
<evidence type="ECO:0000250" key="2">
    <source>
        <dbReference type="UniProtKB" id="P00420"/>
    </source>
</evidence>
<evidence type="ECO:0000305" key="3"/>
<keyword id="KW-0472">Membrane</keyword>
<keyword id="KW-0496">Mitochondrion</keyword>
<keyword id="KW-0999">Mitochondrion inner membrane</keyword>
<keyword id="KW-1185">Reference proteome</keyword>
<keyword id="KW-1278">Translocase</keyword>
<keyword id="KW-0812">Transmembrane</keyword>
<keyword id="KW-1133">Transmembrane helix</keyword>
<comment type="function">
    <text evidence="2">Component of the cytochrome c oxidase, the last enzyme in the mitochondrial electron transport chain which drives oxidative phosphorylation. The respiratory chain contains 3 multisubunit complexes succinate dehydrogenase (complex II, CII), ubiquinol-cytochrome c oxidoreductase (cytochrome b-c1 complex, complex III, CIII) and cytochrome c oxidase (complex IV, CIV), that cooperate to transfer electrons derived from NADH and succinate to molecular oxygen, creating an electrochemical gradient over the inner membrane that drives transmembrane transport and the ATP synthase. Cytochrome c oxidase is the component of the respiratory chain that catalyzes the reduction of oxygen to water. Electrons originating from reduced cytochrome c in the intermembrane space (IMS) are transferred via the dinuclear copper A center (CU(A)) of subunit 2 and heme A of subunit 1 to the active site in subunit 1, a binuclear center (BNC) formed by heme A3 and copper B (CU(B)). The BNC reduces molecular oxygen to 2 water molecules using 4 electrons from cytochrome c in the IMS and 4 protons from the mitochondrial matrix.</text>
</comment>
<comment type="catalytic activity">
    <reaction evidence="2">
        <text>4 Fe(II)-[cytochrome c] + O2 + 8 H(+)(in) = 4 Fe(III)-[cytochrome c] + 2 H2O + 4 H(+)(out)</text>
        <dbReference type="Rhea" id="RHEA:11436"/>
        <dbReference type="Rhea" id="RHEA-COMP:10350"/>
        <dbReference type="Rhea" id="RHEA-COMP:14399"/>
        <dbReference type="ChEBI" id="CHEBI:15377"/>
        <dbReference type="ChEBI" id="CHEBI:15378"/>
        <dbReference type="ChEBI" id="CHEBI:15379"/>
        <dbReference type="ChEBI" id="CHEBI:29033"/>
        <dbReference type="ChEBI" id="CHEBI:29034"/>
        <dbReference type="EC" id="7.1.1.9"/>
    </reaction>
    <physiologicalReaction direction="left-to-right" evidence="2">
        <dbReference type="Rhea" id="RHEA:11437"/>
    </physiologicalReaction>
</comment>
<comment type="subunit">
    <text evidence="1">Component of the cytochrome c oxidase (complex IV, CIV), a multisubunit enzyme composed of 14 subunits. The complex is composed of a catalytic core of 3 subunits MT-CO1, MT-CO2 and MT-CO3, encoded in the mitochondrial DNA, and 11 supernumerary subunits COX4I, COX5A, COX5B, COX6A, COX6B, COX6C, COX7A, COX7B, COX7C, COX8 and NDUFA4, which are encoded in the nuclear genome. The complex exists as a monomer or a dimer and forms supercomplexes (SCs) in the inner mitochondrial membrane with NADH-ubiquinone oxidoreductase (complex I, CI) and ubiquinol-cytochrome c oxidoreductase (cytochrome b-c1 complex, complex III, CIII), resulting in different assemblies (supercomplex SCI(1)III(2)IV(1) and megacomplex MCI(2)III(2)IV(2)).</text>
</comment>
<comment type="subcellular location">
    <subcellularLocation>
        <location evidence="1">Mitochondrion inner membrane</location>
        <topology evidence="1">Multi-pass membrane protein</topology>
    </subcellularLocation>
</comment>
<comment type="similarity">
    <text evidence="3">Belongs to the cytochrome c oxidase subunit 3 family.</text>
</comment>
<dbReference type="EC" id="7.1.1.9"/>
<dbReference type="EMBL" id="DQ316069">
    <property type="protein sequence ID" value="ABC17910.1"/>
    <property type="molecule type" value="Genomic_DNA"/>
</dbReference>
<dbReference type="SMR" id="Q2I3F5"/>
<dbReference type="FunCoup" id="Q2I3F5">
    <property type="interactions" value="39"/>
</dbReference>
<dbReference type="STRING" id="9785.ENSLAFP00000029497"/>
<dbReference type="Ensembl" id="ENSLAFT00000038057.1">
    <property type="protein sequence ID" value="ENSLAFP00000029497.1"/>
    <property type="gene ID" value="ENSLAFG00000033291.1"/>
</dbReference>
<dbReference type="KEGG" id="lav:808787"/>
<dbReference type="CTD" id="4514"/>
<dbReference type="eggNOG" id="KOG4664">
    <property type="taxonomic scope" value="Eukaryota"/>
</dbReference>
<dbReference type="GeneTree" id="ENSGT00390000013064"/>
<dbReference type="HOGENOM" id="CLU_044071_0_0_1"/>
<dbReference type="InParanoid" id="Q2I3F5"/>
<dbReference type="OMA" id="SIYWWGS"/>
<dbReference type="OrthoDB" id="10050457at2759"/>
<dbReference type="TreeFam" id="TF343435"/>
<dbReference type="Proteomes" id="UP000007646">
    <property type="component" value="Unassembled WGS sequence"/>
</dbReference>
<dbReference type="GO" id="GO:0005743">
    <property type="term" value="C:mitochondrial inner membrane"/>
    <property type="evidence" value="ECO:0007669"/>
    <property type="project" value="UniProtKB-SubCell"/>
</dbReference>
<dbReference type="GO" id="GO:0045277">
    <property type="term" value="C:respiratory chain complex IV"/>
    <property type="evidence" value="ECO:0000250"/>
    <property type="project" value="UniProtKB"/>
</dbReference>
<dbReference type="GO" id="GO:0004129">
    <property type="term" value="F:cytochrome-c oxidase activity"/>
    <property type="evidence" value="ECO:0007669"/>
    <property type="project" value="UniProtKB-EC"/>
</dbReference>
<dbReference type="GO" id="GO:0006123">
    <property type="term" value="P:mitochondrial electron transport, cytochrome c to oxygen"/>
    <property type="evidence" value="ECO:0007669"/>
    <property type="project" value="TreeGrafter"/>
</dbReference>
<dbReference type="GO" id="GO:0008535">
    <property type="term" value="P:respiratory chain complex IV assembly"/>
    <property type="evidence" value="ECO:0000250"/>
    <property type="project" value="UniProtKB"/>
</dbReference>
<dbReference type="CDD" id="cd01665">
    <property type="entry name" value="Cyt_c_Oxidase_III"/>
    <property type="match status" value="1"/>
</dbReference>
<dbReference type="FunFam" id="1.10.287.70:FF:000048">
    <property type="entry name" value="Cytochrome c oxidase subunit 3"/>
    <property type="match status" value="1"/>
</dbReference>
<dbReference type="FunFam" id="1.20.120.80:FF:000002">
    <property type="entry name" value="Cytochrome c oxidase subunit 3"/>
    <property type="match status" value="1"/>
</dbReference>
<dbReference type="Gene3D" id="1.10.287.70">
    <property type="match status" value="1"/>
</dbReference>
<dbReference type="Gene3D" id="1.20.120.80">
    <property type="entry name" value="Cytochrome c oxidase, subunit III, four-helix bundle"/>
    <property type="match status" value="1"/>
</dbReference>
<dbReference type="InterPro" id="IPR024791">
    <property type="entry name" value="Cyt_c/ubiquinol_Oxase_su3"/>
</dbReference>
<dbReference type="InterPro" id="IPR033945">
    <property type="entry name" value="Cyt_c_oxase_su3_dom"/>
</dbReference>
<dbReference type="InterPro" id="IPR000298">
    <property type="entry name" value="Cyt_c_oxidase-like_su3"/>
</dbReference>
<dbReference type="InterPro" id="IPR035973">
    <property type="entry name" value="Cyt_c_oxidase_su3-like_sf"/>
</dbReference>
<dbReference type="InterPro" id="IPR013833">
    <property type="entry name" value="Cyt_c_oxidase_su3_a-hlx"/>
</dbReference>
<dbReference type="PANTHER" id="PTHR11403:SF7">
    <property type="entry name" value="CYTOCHROME C OXIDASE SUBUNIT 3"/>
    <property type="match status" value="1"/>
</dbReference>
<dbReference type="PANTHER" id="PTHR11403">
    <property type="entry name" value="CYTOCHROME C OXIDASE SUBUNIT III"/>
    <property type="match status" value="1"/>
</dbReference>
<dbReference type="Pfam" id="PF00510">
    <property type="entry name" value="COX3"/>
    <property type="match status" value="1"/>
</dbReference>
<dbReference type="SUPFAM" id="SSF81452">
    <property type="entry name" value="Cytochrome c oxidase subunit III-like"/>
    <property type="match status" value="1"/>
</dbReference>
<dbReference type="PROSITE" id="PS50253">
    <property type="entry name" value="COX3"/>
    <property type="match status" value="1"/>
</dbReference>
<geneLocation type="mitochondrion"/>
<protein>
    <recommendedName>
        <fullName>Cytochrome c oxidase subunit 3</fullName>
        <ecNumber>7.1.1.9</ecNumber>
    </recommendedName>
    <alternativeName>
        <fullName>Cytochrome c oxidase polypeptide III</fullName>
    </alternativeName>
</protein>
<sequence>MTHQTHAYHMVDPSPWPLTGALSALLMTSGLTMWFHYHSVTLLLLGLTTNILTMFQWWRDVVREGTFQGHHTPVVQESLRYGMILFITSEVLFFTGFFWAFYHSSLAPTPELGSYWPPVGVYPLNPLEVPLLNTSVLLASGVTITWAHHSLMEGNRKNMLQALLITILLGVYFTLLQMFEYYEASFTISDGIYGSTFFVTTGFHGLHVIIGSTFLLTCFIRQLKFHFTSNHHFGFEAAAWYWHFVDVVWLFLYLSIYWWGS</sequence>
<proteinExistence type="inferred from homology"/>
<gene>
    <name type="primary">MT-CO3</name>
    <name type="synonym">COIII</name>
    <name type="synonym">COXIII</name>
    <name type="synonym">MTCO3</name>
</gene>